<protein>
    <recommendedName>
        <fullName evidence="1">Outer-membrane lipoprotein carrier protein</fullName>
    </recommendedName>
</protein>
<name>LOLA_PECAS</name>
<organism>
    <name type="scientific">Pectobacterium atrosepticum (strain SCRI 1043 / ATCC BAA-672)</name>
    <name type="common">Erwinia carotovora subsp. atroseptica</name>
    <dbReference type="NCBI Taxonomy" id="218491"/>
    <lineage>
        <taxon>Bacteria</taxon>
        <taxon>Pseudomonadati</taxon>
        <taxon>Pseudomonadota</taxon>
        <taxon>Gammaproteobacteria</taxon>
        <taxon>Enterobacterales</taxon>
        <taxon>Pectobacteriaceae</taxon>
        <taxon>Pectobacterium</taxon>
    </lineage>
</organism>
<proteinExistence type="inferred from homology"/>
<dbReference type="EMBL" id="BX950851">
    <property type="protein sequence ID" value="CAG75546.1"/>
    <property type="molecule type" value="Genomic_DNA"/>
</dbReference>
<dbReference type="RefSeq" id="WP_011094190.1">
    <property type="nucleotide sequence ID" value="NC_004547.2"/>
</dbReference>
<dbReference type="SMR" id="Q6D3U8"/>
<dbReference type="STRING" id="218491.ECA2646"/>
<dbReference type="KEGG" id="eca:ECA2646"/>
<dbReference type="PATRIC" id="fig|218491.5.peg.2680"/>
<dbReference type="eggNOG" id="COG2834">
    <property type="taxonomic scope" value="Bacteria"/>
</dbReference>
<dbReference type="HOGENOM" id="CLU_087560_1_1_6"/>
<dbReference type="OrthoDB" id="9787361at2"/>
<dbReference type="Proteomes" id="UP000007966">
    <property type="component" value="Chromosome"/>
</dbReference>
<dbReference type="GO" id="GO:0030288">
    <property type="term" value="C:outer membrane-bounded periplasmic space"/>
    <property type="evidence" value="ECO:0007669"/>
    <property type="project" value="TreeGrafter"/>
</dbReference>
<dbReference type="GO" id="GO:0044874">
    <property type="term" value="P:lipoprotein localization to outer membrane"/>
    <property type="evidence" value="ECO:0007669"/>
    <property type="project" value="UniProtKB-UniRule"/>
</dbReference>
<dbReference type="GO" id="GO:0042953">
    <property type="term" value="P:lipoprotein transport"/>
    <property type="evidence" value="ECO:0007669"/>
    <property type="project" value="InterPro"/>
</dbReference>
<dbReference type="CDD" id="cd16325">
    <property type="entry name" value="LolA"/>
    <property type="match status" value="1"/>
</dbReference>
<dbReference type="FunFam" id="2.50.20.10:FF:000001">
    <property type="entry name" value="Outer-membrane lipoprotein carrier protein"/>
    <property type="match status" value="1"/>
</dbReference>
<dbReference type="Gene3D" id="2.50.20.10">
    <property type="entry name" value="Lipoprotein localisation LolA/LolB/LppX"/>
    <property type="match status" value="1"/>
</dbReference>
<dbReference type="HAMAP" id="MF_00240">
    <property type="entry name" value="LolA"/>
    <property type="match status" value="1"/>
</dbReference>
<dbReference type="InterPro" id="IPR029046">
    <property type="entry name" value="LolA/LolB/LppX"/>
</dbReference>
<dbReference type="InterPro" id="IPR004564">
    <property type="entry name" value="OM_lipoprot_carrier_LolA-like"/>
</dbReference>
<dbReference type="InterPro" id="IPR018323">
    <property type="entry name" value="OM_lipoprot_carrier_LolA_Pbac"/>
</dbReference>
<dbReference type="NCBIfam" id="TIGR00547">
    <property type="entry name" value="lolA"/>
    <property type="match status" value="1"/>
</dbReference>
<dbReference type="PANTHER" id="PTHR35869">
    <property type="entry name" value="OUTER-MEMBRANE LIPOPROTEIN CARRIER PROTEIN"/>
    <property type="match status" value="1"/>
</dbReference>
<dbReference type="PANTHER" id="PTHR35869:SF1">
    <property type="entry name" value="OUTER-MEMBRANE LIPOPROTEIN CARRIER PROTEIN"/>
    <property type="match status" value="1"/>
</dbReference>
<dbReference type="Pfam" id="PF03548">
    <property type="entry name" value="LolA"/>
    <property type="match status" value="1"/>
</dbReference>
<dbReference type="SUPFAM" id="SSF89392">
    <property type="entry name" value="Prokaryotic lipoproteins and lipoprotein localization factors"/>
    <property type="match status" value="1"/>
</dbReference>
<gene>
    <name evidence="1" type="primary">lolA</name>
    <name type="ordered locus">ECA2646</name>
</gene>
<accession>Q6D3U8</accession>
<evidence type="ECO:0000255" key="1">
    <source>
        <dbReference type="HAMAP-Rule" id="MF_00240"/>
    </source>
</evidence>
<keyword id="KW-0143">Chaperone</keyword>
<keyword id="KW-0574">Periplasm</keyword>
<keyword id="KW-0653">Protein transport</keyword>
<keyword id="KW-1185">Reference proteome</keyword>
<keyword id="KW-0732">Signal</keyword>
<keyword id="KW-0813">Transport</keyword>
<comment type="function">
    <text evidence="1">Participates in the translocation of lipoproteins from the inner membrane to the outer membrane. Only forms a complex with a lipoprotein if the residue after the N-terminal Cys is not an aspartate (The Asp acts as a targeting signal to indicate that the lipoprotein should stay in the inner membrane).</text>
</comment>
<comment type="subunit">
    <text evidence="1">Monomer.</text>
</comment>
<comment type="subcellular location">
    <subcellularLocation>
        <location evidence="1">Periplasm</location>
    </subcellularLocation>
</comment>
<comment type="similarity">
    <text evidence="1">Belongs to the LolA family.</text>
</comment>
<feature type="signal peptide" evidence="1">
    <location>
        <begin position="1"/>
        <end position="21"/>
    </location>
</feature>
<feature type="chain" id="PRO_1000005690" description="Outer-membrane lipoprotein carrier protein">
    <location>
        <begin position="22"/>
        <end position="203"/>
    </location>
</feature>
<reference key="1">
    <citation type="journal article" date="2004" name="Proc. Natl. Acad. Sci. U.S.A.">
        <title>Genome sequence of the enterobacterial phytopathogen Erwinia carotovora subsp. atroseptica and characterization of virulence factors.</title>
        <authorList>
            <person name="Bell K.S."/>
            <person name="Sebaihia M."/>
            <person name="Pritchard L."/>
            <person name="Holden M.T.G."/>
            <person name="Hyman L.J."/>
            <person name="Holeva M.C."/>
            <person name="Thomson N.R."/>
            <person name="Bentley S.D."/>
            <person name="Churcher L.J.C."/>
            <person name="Mungall K."/>
            <person name="Atkin R."/>
            <person name="Bason N."/>
            <person name="Brooks K."/>
            <person name="Chillingworth T."/>
            <person name="Clark K."/>
            <person name="Doggett J."/>
            <person name="Fraser A."/>
            <person name="Hance Z."/>
            <person name="Hauser H."/>
            <person name="Jagels K."/>
            <person name="Moule S."/>
            <person name="Norbertczak H."/>
            <person name="Ormond D."/>
            <person name="Price C."/>
            <person name="Quail M.A."/>
            <person name="Sanders M."/>
            <person name="Walker D."/>
            <person name="Whitehead S."/>
            <person name="Salmond G.P.C."/>
            <person name="Birch P.R.J."/>
            <person name="Parkhill J."/>
            <person name="Toth I.K."/>
        </authorList>
    </citation>
    <scope>NUCLEOTIDE SEQUENCE [LARGE SCALE GENOMIC DNA]</scope>
    <source>
        <strain>SCRI 1043 / ATCC BAA-672</strain>
    </source>
</reference>
<sequence length="203" mass="22594">MKKWLAISCLIAGVTSTAVYADAAKDLQGRLNKVNSFHANFSQKVTSTDGAAVQEGEGELWLKRPNLFNWKTTSPDESALISDGKTLWFYNPFVEQVTATWLKDATGNTPFILITRNDTSDWNKYDVRQKGDDFELTPKSASGNLKQFAINVTTNGTIKQFTATEQDGQRSTYVLRNQQNGVVDAAQFTFTPPKGVTLDDQRQ</sequence>